<name>RL15_ALCBS</name>
<accession>Q0VSI4</accession>
<feature type="chain" id="PRO_0000251484" description="Large ribosomal subunit protein uL15">
    <location>
        <begin position="1"/>
        <end position="144"/>
    </location>
</feature>
<feature type="region of interest" description="Disordered" evidence="2">
    <location>
        <begin position="1"/>
        <end position="58"/>
    </location>
</feature>
<feature type="compositionally biased region" description="Basic and acidic residues" evidence="2">
    <location>
        <begin position="1"/>
        <end position="18"/>
    </location>
</feature>
<feature type="compositionally biased region" description="Gly residues" evidence="2">
    <location>
        <begin position="21"/>
        <end position="31"/>
    </location>
</feature>
<keyword id="KW-1185">Reference proteome</keyword>
<keyword id="KW-0687">Ribonucleoprotein</keyword>
<keyword id="KW-0689">Ribosomal protein</keyword>
<keyword id="KW-0694">RNA-binding</keyword>
<keyword id="KW-0699">rRNA-binding</keyword>
<proteinExistence type="inferred from homology"/>
<comment type="function">
    <text evidence="1">Binds to the 23S rRNA.</text>
</comment>
<comment type="subunit">
    <text evidence="1">Part of the 50S ribosomal subunit.</text>
</comment>
<comment type="similarity">
    <text evidence="1">Belongs to the universal ribosomal protein uL15 family.</text>
</comment>
<sequence length="144" mass="15197">MRLNDLHPAEGSRPEGKRVGRGIGSGLGKTGGRGHKGQKSRSGGSVKPGFEGGQMPLQRRVPKFGFTSKLAMGTAEVRLAELAKVEGDVIDLASLKAANIVRRDMKRAKIVLQGEIDRAVTVRGVALTKGAREAVEKAGGKVEE</sequence>
<evidence type="ECO:0000255" key="1">
    <source>
        <dbReference type="HAMAP-Rule" id="MF_01341"/>
    </source>
</evidence>
<evidence type="ECO:0000256" key="2">
    <source>
        <dbReference type="SAM" id="MobiDB-lite"/>
    </source>
</evidence>
<evidence type="ECO:0000305" key="3"/>
<protein>
    <recommendedName>
        <fullName evidence="1">Large ribosomal subunit protein uL15</fullName>
    </recommendedName>
    <alternativeName>
        <fullName evidence="3">50S ribosomal protein L15</fullName>
    </alternativeName>
</protein>
<organism>
    <name type="scientific">Alcanivorax borkumensis (strain ATCC 700651 / DSM 11573 / NCIMB 13689 / SK2)</name>
    <dbReference type="NCBI Taxonomy" id="393595"/>
    <lineage>
        <taxon>Bacteria</taxon>
        <taxon>Pseudomonadati</taxon>
        <taxon>Pseudomonadota</taxon>
        <taxon>Gammaproteobacteria</taxon>
        <taxon>Oceanospirillales</taxon>
        <taxon>Alcanivoracaceae</taxon>
        <taxon>Alcanivorax</taxon>
    </lineage>
</organism>
<reference key="1">
    <citation type="journal article" date="2006" name="Nat. Biotechnol.">
        <title>Genome sequence of the ubiquitous hydrocarbon-degrading marine bacterium Alcanivorax borkumensis.</title>
        <authorList>
            <person name="Schneiker S."/>
            <person name="Martins dos Santos V.A.P."/>
            <person name="Bartels D."/>
            <person name="Bekel T."/>
            <person name="Brecht M."/>
            <person name="Buhrmester J."/>
            <person name="Chernikova T.N."/>
            <person name="Denaro R."/>
            <person name="Ferrer M."/>
            <person name="Gertler C."/>
            <person name="Goesmann A."/>
            <person name="Golyshina O.V."/>
            <person name="Kaminski F."/>
            <person name="Khachane A.N."/>
            <person name="Lang S."/>
            <person name="Linke B."/>
            <person name="McHardy A.C."/>
            <person name="Meyer F."/>
            <person name="Nechitaylo T."/>
            <person name="Puehler A."/>
            <person name="Regenhardt D."/>
            <person name="Rupp O."/>
            <person name="Sabirova J.S."/>
            <person name="Selbitschka W."/>
            <person name="Yakimov M.M."/>
            <person name="Timmis K.N."/>
            <person name="Vorhoelter F.-J."/>
            <person name="Weidner S."/>
            <person name="Kaiser O."/>
            <person name="Golyshin P.N."/>
        </authorList>
    </citation>
    <scope>NUCLEOTIDE SEQUENCE [LARGE SCALE GENOMIC DNA]</scope>
    <source>
        <strain>ATCC 700651 / DSM 11573 / NCIMB 13689 / SK2</strain>
    </source>
</reference>
<gene>
    <name evidence="1" type="primary">rplO</name>
    <name type="ordered locus">ABO_0416</name>
</gene>
<dbReference type="EMBL" id="AM286690">
    <property type="protein sequence ID" value="CAL15864.1"/>
    <property type="molecule type" value="Genomic_DNA"/>
</dbReference>
<dbReference type="RefSeq" id="WP_011587703.1">
    <property type="nucleotide sequence ID" value="NC_008260.1"/>
</dbReference>
<dbReference type="SMR" id="Q0VSI4"/>
<dbReference type="STRING" id="393595.ABO_0416"/>
<dbReference type="KEGG" id="abo:ABO_0416"/>
<dbReference type="eggNOG" id="COG0200">
    <property type="taxonomic scope" value="Bacteria"/>
</dbReference>
<dbReference type="HOGENOM" id="CLU_055188_4_2_6"/>
<dbReference type="OrthoDB" id="9810293at2"/>
<dbReference type="Proteomes" id="UP000008871">
    <property type="component" value="Chromosome"/>
</dbReference>
<dbReference type="GO" id="GO:0022625">
    <property type="term" value="C:cytosolic large ribosomal subunit"/>
    <property type="evidence" value="ECO:0007669"/>
    <property type="project" value="TreeGrafter"/>
</dbReference>
<dbReference type="GO" id="GO:0019843">
    <property type="term" value="F:rRNA binding"/>
    <property type="evidence" value="ECO:0007669"/>
    <property type="project" value="UniProtKB-UniRule"/>
</dbReference>
<dbReference type="GO" id="GO:0003735">
    <property type="term" value="F:structural constituent of ribosome"/>
    <property type="evidence" value="ECO:0007669"/>
    <property type="project" value="InterPro"/>
</dbReference>
<dbReference type="GO" id="GO:0006412">
    <property type="term" value="P:translation"/>
    <property type="evidence" value="ECO:0007669"/>
    <property type="project" value="UniProtKB-UniRule"/>
</dbReference>
<dbReference type="Gene3D" id="3.100.10.10">
    <property type="match status" value="1"/>
</dbReference>
<dbReference type="HAMAP" id="MF_01341">
    <property type="entry name" value="Ribosomal_uL15"/>
    <property type="match status" value="1"/>
</dbReference>
<dbReference type="InterPro" id="IPR030878">
    <property type="entry name" value="Ribosomal_uL15"/>
</dbReference>
<dbReference type="InterPro" id="IPR021131">
    <property type="entry name" value="Ribosomal_uL15/eL18"/>
</dbReference>
<dbReference type="InterPro" id="IPR036227">
    <property type="entry name" value="Ribosomal_uL15/eL18_sf"/>
</dbReference>
<dbReference type="InterPro" id="IPR005749">
    <property type="entry name" value="Ribosomal_uL15_bac-type"/>
</dbReference>
<dbReference type="InterPro" id="IPR001196">
    <property type="entry name" value="Ribosomal_uL15_CS"/>
</dbReference>
<dbReference type="NCBIfam" id="TIGR01071">
    <property type="entry name" value="rplO_bact"/>
    <property type="match status" value="1"/>
</dbReference>
<dbReference type="PANTHER" id="PTHR12934">
    <property type="entry name" value="50S RIBOSOMAL PROTEIN L15"/>
    <property type="match status" value="1"/>
</dbReference>
<dbReference type="PANTHER" id="PTHR12934:SF11">
    <property type="entry name" value="LARGE RIBOSOMAL SUBUNIT PROTEIN UL15M"/>
    <property type="match status" value="1"/>
</dbReference>
<dbReference type="Pfam" id="PF00828">
    <property type="entry name" value="Ribosomal_L27A"/>
    <property type="match status" value="1"/>
</dbReference>
<dbReference type="SUPFAM" id="SSF52080">
    <property type="entry name" value="Ribosomal proteins L15p and L18e"/>
    <property type="match status" value="1"/>
</dbReference>
<dbReference type="PROSITE" id="PS00475">
    <property type="entry name" value="RIBOSOMAL_L15"/>
    <property type="match status" value="1"/>
</dbReference>